<accession>Q766D5</accession>
<accession>Q8CHV2</accession>
<gene>
    <name type="primary">B4galnt4</name>
</gene>
<name>B4GN4_MOUSE</name>
<proteinExistence type="evidence at transcript level"/>
<evidence type="ECO:0000250" key="1"/>
<evidence type="ECO:0000255" key="2"/>
<evidence type="ECO:0000255" key="3">
    <source>
        <dbReference type="PROSITE-ProRule" id="PRU01164"/>
    </source>
</evidence>
<evidence type="ECO:0000256" key="4">
    <source>
        <dbReference type="SAM" id="MobiDB-lite"/>
    </source>
</evidence>
<evidence type="ECO:0000303" key="5">
    <source>
    </source>
</evidence>
<evidence type="ECO:0000305" key="6"/>
<sequence length="1034" mass="117373">MPWFPVKKVRKQMKLLLLLLLLTCAAWLTYVHRSLVRPGRALRQRLGYGRDGEKLTGVTDSRGVRVPSSTQRSEDSSESHEEEQAPEGRGPNMLFPGGPRKPPPLNLTHQTPPWREEFKGQVNLHVFEDWCGGAVGHLRRNLHFPLFPHTRTTVTKLAVSPKWKNYGLRIFGFIHPARDGDIQFSVASDDNSEFWLSLDESPAAAQLVAFVGKTGSEWTAPGEFTKFSSQVSKPRRLMASRRYYFELLHKQDDKGSDHVEVGWRAFLPGLKFEIIDSAHISLYTDESSLKMDHVAHVPQSPASHIGGFPPQGEPSADMLHPDPRDTFFLTPRMEPLSLENVLEPCAYAPTYILKDFPIARYQGLQFVYLSFIYPNDHTRLTHMETDNKCFYRESPLYLERFGFYKYMKMDKEEGEEDEEEEVQRRAFLFLNPDDFLDEEDEQDLLDSLEPTDASVQQSHRTPTPAASTGTTASPTPPTTSPLDEQTLRHSRALNWAPRPLPLFLGRAPPPRTVEKSPSKVYVTRVRPGQRASPRALRDSPWPPFPGVFLRPKPLPRVQLRVPPHPPRTQGYRTSGPKVTELKPPVRAQTSQGGREGQLHGQGLMVPTVDLNSSVETQPVTSFLSLSQVSRPQLPGEGEEGEEDGAPGDEATSEDSEEEEEPAAGRPLGRWREDAINWQRTFSVGAMDFELLRSDWNDLRCNVSGNLQLPEAEAVDVVAQYMERLNAKHGGRFSLLRIVNVEKRRDSARGSRFLLELELQERGGSRQRLSEYVFLRLPGARVGDEDGESPEPPPAASIHPDSRPELCRPLHLAWRQDVMVHFIVPVKNQARWVVQFLADMTALHVHTGDSYFNIILVDFESEDMDVERALRAAQLPRYQYLKRTGNFERSAGLQTGVDAVEDPSSIVFLCDLHIHFPPNILDSIRKHCVEGKLAFAPVVMRLGCGSSPWDPHGYWEVNGFGLFGIYKSDFDRVGGMNTEEFRDQWGGEDWELLDRVLQAGLEVERLRLRHFYHHYHSKRGMWATRSRKGARAQRS</sequence>
<protein>
    <recommendedName>
        <fullName>N-acetyl-beta-glucosaminyl-glycoprotein 4-beta-N-acetylgalactosaminyltransferase 1</fullName>
        <shortName>NGalNAc-T1</shortName>
        <ecNumber>2.4.1.244</ecNumber>
    </recommendedName>
    <alternativeName>
        <fullName>Beta-1,4-N-acetylgalactosaminyltransferase IV</fullName>
        <shortName>Beta4GalNAc-T4</shortName>
        <shortName>Beta4GalNAcT4</shortName>
    </alternativeName>
</protein>
<dbReference type="EC" id="2.4.1.244"/>
<dbReference type="EMBL" id="AB114827">
    <property type="protein sequence ID" value="BAD15101.1"/>
    <property type="molecule type" value="mRNA"/>
</dbReference>
<dbReference type="EMBL" id="BC038881">
    <property type="protein sequence ID" value="AAH38881.1"/>
    <property type="molecule type" value="mRNA"/>
</dbReference>
<dbReference type="CCDS" id="CCDS21998.1">
    <molecule id="Q766D5-1"/>
</dbReference>
<dbReference type="RefSeq" id="NP_808565.2">
    <molecule id="Q766D5-1"/>
    <property type="nucleotide sequence ID" value="NM_177897.3"/>
</dbReference>
<dbReference type="SMR" id="Q766D5"/>
<dbReference type="FunCoup" id="Q766D5">
    <property type="interactions" value="266"/>
</dbReference>
<dbReference type="STRING" id="10090.ENSMUSP00000039758"/>
<dbReference type="CAZy" id="GT7">
    <property type="family name" value="Glycosyltransferase Family 7"/>
</dbReference>
<dbReference type="GlyCosmos" id="Q766D5">
    <property type="glycosylation" value="2 sites, No reported glycans"/>
</dbReference>
<dbReference type="GlyGen" id="Q766D5">
    <property type="glycosylation" value="4 sites, 2 N-linked glycans (2 sites)"/>
</dbReference>
<dbReference type="iPTMnet" id="Q766D5"/>
<dbReference type="PhosphoSitePlus" id="Q766D5"/>
<dbReference type="PaxDb" id="10090-ENSMUSP00000039758"/>
<dbReference type="PeptideAtlas" id="Q766D5"/>
<dbReference type="ProteomicsDB" id="273524">
    <molecule id="Q766D5-1"/>
</dbReference>
<dbReference type="ProteomicsDB" id="273525">
    <molecule id="Q766D5-2"/>
</dbReference>
<dbReference type="Antibodypedia" id="64249">
    <property type="antibodies" value="7 antibodies from 5 providers"/>
</dbReference>
<dbReference type="DNASU" id="330671"/>
<dbReference type="Ensembl" id="ENSMUST00000048002.7">
    <molecule id="Q766D5-1"/>
    <property type="protein sequence ID" value="ENSMUSP00000039758.6"/>
    <property type="gene ID" value="ENSMUSG00000055629.6"/>
</dbReference>
<dbReference type="GeneID" id="330671"/>
<dbReference type="KEGG" id="mmu:330671"/>
<dbReference type="UCSC" id="uc009kje.1">
    <molecule id="Q766D5-1"/>
    <property type="organism name" value="mouse"/>
</dbReference>
<dbReference type="UCSC" id="uc009kjg.1">
    <molecule id="Q766D5-2"/>
    <property type="organism name" value="mouse"/>
</dbReference>
<dbReference type="AGR" id="MGI:2652891"/>
<dbReference type="CTD" id="338707"/>
<dbReference type="MGI" id="MGI:2652891">
    <property type="gene designation" value="B4galnt4"/>
</dbReference>
<dbReference type="VEuPathDB" id="HostDB:ENSMUSG00000055629"/>
<dbReference type="eggNOG" id="KOG3588">
    <property type="taxonomic scope" value="Eukaryota"/>
</dbReference>
<dbReference type="GeneTree" id="ENSGT01050000244857"/>
<dbReference type="HOGENOM" id="CLU_011195_0_0_1"/>
<dbReference type="InParanoid" id="Q766D5"/>
<dbReference type="OMA" id="WLSPDEC"/>
<dbReference type="OrthoDB" id="5971499at2759"/>
<dbReference type="PhylomeDB" id="Q766D5"/>
<dbReference type="TreeFam" id="TF318303"/>
<dbReference type="BioGRID-ORCS" id="330671">
    <property type="hits" value="2 hits in 81 CRISPR screens"/>
</dbReference>
<dbReference type="ChiTaRS" id="B4galnt4">
    <property type="organism name" value="mouse"/>
</dbReference>
<dbReference type="PRO" id="PR:Q766D5"/>
<dbReference type="Proteomes" id="UP000000589">
    <property type="component" value="Chromosome 7"/>
</dbReference>
<dbReference type="RNAct" id="Q766D5">
    <property type="molecule type" value="protein"/>
</dbReference>
<dbReference type="Bgee" id="ENSMUSG00000055629">
    <property type="expression patterns" value="Expressed in embryonic brain and 160 other cell types or tissues"/>
</dbReference>
<dbReference type="ExpressionAtlas" id="Q766D5">
    <property type="expression patterns" value="baseline and differential"/>
</dbReference>
<dbReference type="GO" id="GO:0032580">
    <property type="term" value="C:Golgi cisterna membrane"/>
    <property type="evidence" value="ECO:0007669"/>
    <property type="project" value="UniProtKB-SubCell"/>
</dbReference>
<dbReference type="GO" id="GO:0008376">
    <property type="term" value="F:acetylgalactosaminyltransferase activity"/>
    <property type="evidence" value="ECO:0000250"/>
    <property type="project" value="HGNC-UCL"/>
</dbReference>
<dbReference type="GO" id="GO:0047238">
    <property type="term" value="F:glucuronosyl-N-acetylgalactosaminyl-proteoglycan 4-beta-N-acetylgalactosaminyltransferase activity"/>
    <property type="evidence" value="ECO:0007669"/>
    <property type="project" value="UniProtKB-ARBA"/>
</dbReference>
<dbReference type="GO" id="GO:0033842">
    <property type="term" value="F:N-acetyl-beta-glucosaminyl-derivative 4-beta-N-acetylgalactosaminyltransferase activity"/>
    <property type="evidence" value="ECO:0007669"/>
    <property type="project" value="UniProtKB-EC"/>
</dbReference>
<dbReference type="FunFam" id="3.90.550.10:FF:000063">
    <property type="entry name" value="Beta-1,4-N-acetylgalactosaminyltransferase"/>
    <property type="match status" value="1"/>
</dbReference>
<dbReference type="Gene3D" id="3.90.550.10">
    <property type="entry name" value="Spore Coat Polysaccharide Biosynthesis Protein SpsA, Chain A"/>
    <property type="match status" value="1"/>
</dbReference>
<dbReference type="InterPro" id="IPR008428">
    <property type="entry name" value="Chond_GalNAc"/>
</dbReference>
<dbReference type="InterPro" id="IPR051227">
    <property type="entry name" value="CS_glycosyltransferase"/>
</dbReference>
<dbReference type="InterPro" id="IPR029044">
    <property type="entry name" value="Nucleotide-diphossugar_trans"/>
</dbReference>
<dbReference type="InterPro" id="IPR037524">
    <property type="entry name" value="PA14/GLEYA"/>
</dbReference>
<dbReference type="InterPro" id="IPR011658">
    <property type="entry name" value="PA14_dom"/>
</dbReference>
<dbReference type="PANTHER" id="PTHR12369">
    <property type="entry name" value="CHONDROITIN SYNTHASE"/>
    <property type="match status" value="1"/>
</dbReference>
<dbReference type="PANTHER" id="PTHR12369:SF46">
    <property type="entry name" value="N-ACETYL-BETA-GLUCOSAMINYL-GLYCOPROTEIN 4-BETA-N-ACETYLGALACTOSAMINYLTRANSFERASE 1"/>
    <property type="match status" value="1"/>
</dbReference>
<dbReference type="Pfam" id="PF05679">
    <property type="entry name" value="CHGN"/>
    <property type="match status" value="1"/>
</dbReference>
<dbReference type="SMART" id="SM00758">
    <property type="entry name" value="PA14"/>
    <property type="match status" value="1"/>
</dbReference>
<dbReference type="SUPFAM" id="SSF53448">
    <property type="entry name" value="Nucleotide-diphospho-sugar transferases"/>
    <property type="match status" value="1"/>
</dbReference>
<dbReference type="PROSITE" id="PS51820">
    <property type="entry name" value="PA14"/>
    <property type="match status" value="1"/>
</dbReference>
<feature type="chain" id="PRO_0000252371" description="N-acetyl-beta-glucosaminyl-glycoprotein 4-beta-N-acetylgalactosaminyltransferase 1">
    <location>
        <begin position="1"/>
        <end position="1034"/>
    </location>
</feature>
<feature type="topological domain" description="Cytoplasmic" evidence="2">
    <location>
        <begin position="1"/>
        <end position="12"/>
    </location>
</feature>
<feature type="transmembrane region" description="Helical; Signal-anchor for type II membrane protein" evidence="2">
    <location>
        <begin position="13"/>
        <end position="31"/>
    </location>
</feature>
<feature type="topological domain" description="Lumenal" evidence="2">
    <location>
        <begin position="32"/>
        <end position="1034"/>
    </location>
</feature>
<feature type="domain" description="PA14" evidence="3">
    <location>
        <begin position="109"/>
        <end position="279"/>
    </location>
</feature>
<feature type="region of interest" description="Disordered" evidence="4">
    <location>
        <begin position="51"/>
        <end position="104"/>
    </location>
</feature>
<feature type="region of interest" description="Disordered" evidence="4">
    <location>
        <begin position="450"/>
        <end position="486"/>
    </location>
</feature>
<feature type="region of interest" description="Disordered" evidence="4">
    <location>
        <begin position="556"/>
        <end position="600"/>
    </location>
</feature>
<feature type="region of interest" description="Disordered" evidence="4">
    <location>
        <begin position="626"/>
        <end position="669"/>
    </location>
</feature>
<feature type="region of interest" description="Disordered" evidence="4">
    <location>
        <begin position="782"/>
        <end position="801"/>
    </location>
</feature>
<feature type="compositionally biased region" description="Basic and acidic residues" evidence="4">
    <location>
        <begin position="72"/>
        <end position="83"/>
    </location>
</feature>
<feature type="compositionally biased region" description="Low complexity" evidence="4">
    <location>
        <begin position="461"/>
        <end position="473"/>
    </location>
</feature>
<feature type="compositionally biased region" description="Acidic residues" evidence="4">
    <location>
        <begin position="636"/>
        <end position="661"/>
    </location>
</feature>
<feature type="glycosylation site" description="N-linked (GlcNAc...) asparagine" evidence="2">
    <location>
        <position position="106"/>
    </location>
</feature>
<feature type="glycosylation site" description="N-linked (GlcNAc...) asparagine" evidence="2">
    <location>
        <position position="611"/>
    </location>
</feature>
<feature type="splice variant" id="VSP_020917" description="In isoform 2." evidence="5">
    <location>
        <begin position="1"/>
        <end position="817"/>
    </location>
</feature>
<organism>
    <name type="scientific">Mus musculus</name>
    <name type="common">Mouse</name>
    <dbReference type="NCBI Taxonomy" id="10090"/>
    <lineage>
        <taxon>Eukaryota</taxon>
        <taxon>Metazoa</taxon>
        <taxon>Chordata</taxon>
        <taxon>Craniata</taxon>
        <taxon>Vertebrata</taxon>
        <taxon>Euteleostomi</taxon>
        <taxon>Mammalia</taxon>
        <taxon>Eutheria</taxon>
        <taxon>Euarchontoglires</taxon>
        <taxon>Glires</taxon>
        <taxon>Rodentia</taxon>
        <taxon>Myomorpha</taxon>
        <taxon>Muroidea</taxon>
        <taxon>Muridae</taxon>
        <taxon>Murinae</taxon>
        <taxon>Mus</taxon>
        <taxon>Mus</taxon>
    </lineage>
</organism>
<comment type="function">
    <text evidence="1">Transfers N-acetylgalactosamine (GalNAc) from UDP-GalNAc to N-acetylglucosamine-beta-benzyl with a beta-1,4-linkage to form N,N'-diacetyllactosediamine, GalNAc-beta-1,4-GlcNAc structures in N-linked glycans and probably O-linked glycans.</text>
</comment>
<comment type="catalytic activity">
    <reaction>
        <text>an N-acetyl-beta-D-glucosaminyl derivative + UDP-N-acetyl-alpha-D-galactosamine = an N-acetyl-beta-D-galactosaminyl-(1-&gt;4)-N-acetyl-beta-D-glucosaminyl derivative + UDP + H(+)</text>
        <dbReference type="Rhea" id="RHEA:20493"/>
        <dbReference type="ChEBI" id="CHEBI:15378"/>
        <dbReference type="ChEBI" id="CHEBI:58223"/>
        <dbReference type="ChEBI" id="CHEBI:61631"/>
        <dbReference type="ChEBI" id="CHEBI:67138"/>
        <dbReference type="ChEBI" id="CHEBI:138027"/>
        <dbReference type="EC" id="2.4.1.244"/>
    </reaction>
</comment>
<comment type="subcellular location">
    <subcellularLocation>
        <location evidence="1">Golgi apparatus</location>
        <location evidence="1">Golgi stack membrane</location>
        <topology evidence="1">Single-pass type II membrane protein</topology>
    </subcellularLocation>
</comment>
<comment type="alternative products">
    <event type="alternative splicing"/>
    <isoform>
        <id>Q766D5-1</id>
        <name>1</name>
        <sequence type="displayed"/>
    </isoform>
    <isoform>
        <id>Q766D5-2</id>
        <name>2</name>
        <sequence type="described" ref="VSP_020917"/>
    </isoform>
</comment>
<comment type="similarity">
    <text evidence="6">Belongs to the chondroitin N-acetylgalactosaminyltransferase family.</text>
</comment>
<comment type="online information" name="Functional Glycomics Gateway - GTase">
    <link uri="http://www.functionalglycomics.org/glycomics/search/jsp/landing.jsp?query=gt_mou_508"/>
    <text>Beta1,4-N-acetylgalactosaminyltransferase IV</text>
</comment>
<reference key="1">
    <citation type="journal article" date="2004" name="FEBS Lett.">
        <title>Molecular cloning and characterization of beta1,4-N-acetylgalactosaminyltransferases IV synthesizing N,N'-diacetyllactosediamine.</title>
        <authorList>
            <person name="Gotoh M."/>
            <person name="Sato T."/>
            <person name="Kiyohara K."/>
            <person name="Kameyama A."/>
            <person name="Kikuchi N."/>
            <person name="Kwon Y.-D."/>
            <person name="Ishizuka Y."/>
            <person name="Iwai T."/>
            <person name="Nakanishi H."/>
            <person name="Narimatsu H."/>
        </authorList>
    </citation>
    <scope>NUCLEOTIDE SEQUENCE [MRNA] (ISOFORM 1)</scope>
</reference>
<reference key="2">
    <citation type="journal article" date="2004" name="Genome Res.">
        <title>The status, quality, and expansion of the NIH full-length cDNA project: the Mammalian Gene Collection (MGC).</title>
        <authorList>
            <consortium name="The MGC Project Team"/>
        </authorList>
    </citation>
    <scope>NUCLEOTIDE SEQUENCE [LARGE SCALE MRNA] (ISOFORM 2)</scope>
    <source>
        <tissue>Mammary gland</tissue>
    </source>
</reference>
<keyword id="KW-0025">Alternative splicing</keyword>
<keyword id="KW-0325">Glycoprotein</keyword>
<keyword id="KW-0333">Golgi apparatus</keyword>
<keyword id="KW-0472">Membrane</keyword>
<keyword id="KW-1185">Reference proteome</keyword>
<keyword id="KW-0735">Signal-anchor</keyword>
<keyword id="KW-0808">Transferase</keyword>
<keyword id="KW-0812">Transmembrane</keyword>
<keyword id="KW-1133">Transmembrane helix</keyword>